<sequence length="334" mass="38677">MAPEMNNKLSYGEKKRAYVTFLAGTGDYVKGVVGLAKGLRKTKSKYPLVVAVLPDVPADHRRQLLDQGCVIKEIQPVYPPDNQTQFAMAYYVLNYSKLRIWKFVEYSKLIYLDGDIQVFENIDHLFDLPDGNFYAVKDCFCEKTWSHTPQYKIGYCQQCPDKVTWPESELGPKPPLYFNAGMFVYEPSLPTYYNLLETLKVVPPTPFAEQDFLNMYFKDIYKPIPPVYNLVLAMLWRHPENIELNEAKVVHYCAAGAKPWRFTGQEGNMEREDIKMLVEKWWDIYNDESLDYKNFNVHCGQKEDVHRKPKTLPQFFTDLSEADVLQCAKAPSAA</sequence>
<organism>
    <name type="scientific">Arabidopsis thaliana</name>
    <name type="common">Mouse-ear cress</name>
    <dbReference type="NCBI Taxonomy" id="3702"/>
    <lineage>
        <taxon>Eukaryota</taxon>
        <taxon>Viridiplantae</taxon>
        <taxon>Streptophyta</taxon>
        <taxon>Embryophyta</taxon>
        <taxon>Tracheophyta</taxon>
        <taxon>Spermatophyta</taxon>
        <taxon>Magnoliopsida</taxon>
        <taxon>eudicotyledons</taxon>
        <taxon>Gunneridae</taxon>
        <taxon>Pentapetalae</taxon>
        <taxon>rosids</taxon>
        <taxon>malvids</taxon>
        <taxon>Brassicales</taxon>
        <taxon>Brassicaceae</taxon>
        <taxon>Camelineae</taxon>
        <taxon>Arabidopsis</taxon>
    </lineage>
</organism>
<feature type="chain" id="PRO_0000418659" description="Galactinol synthase 3">
    <location>
        <begin position="1"/>
        <end position="334"/>
    </location>
</feature>
<feature type="active site" evidence="1">
    <location>
        <position position="97"/>
    </location>
</feature>
<feature type="binding site" evidence="1">
    <location>
        <position position="113"/>
    </location>
    <ligand>
        <name>Mn(2+)</name>
        <dbReference type="ChEBI" id="CHEBI:29035"/>
    </ligand>
</feature>
<feature type="binding site" evidence="1">
    <location>
        <position position="115"/>
    </location>
    <ligand>
        <name>Mn(2+)</name>
        <dbReference type="ChEBI" id="CHEBI:29035"/>
    </ligand>
</feature>
<feature type="binding site" evidence="1">
    <location>
        <position position="251"/>
    </location>
    <ligand>
        <name>Mn(2+)</name>
        <dbReference type="ChEBI" id="CHEBI:29035"/>
    </ligand>
</feature>
<accession>O80518</accession>
<reference key="1">
    <citation type="journal article" date="2002" name="Plant J.">
        <title>Important roles of drought- and cold-inducible genes for galactinol synthase in stress tolerance in Arabidopsis thaliana.</title>
        <authorList>
            <person name="Taji T."/>
            <person name="Ohsumi C."/>
            <person name="Iuchi S."/>
            <person name="Seki M."/>
            <person name="Kasuga M."/>
            <person name="Kobayashi M."/>
            <person name="Yamaguchi-Shinozaki K."/>
            <person name="Shinozaki K."/>
        </authorList>
    </citation>
    <scope>NUCLEOTIDE SEQUENCE [MRNA]</scope>
    <scope>INDUCTION BY COLD</scope>
    <scope>CATALYTIC ACTIVITY</scope>
    <scope>GENE FAMILY</scope>
</reference>
<reference key="2">
    <citation type="journal article" date="2000" name="Nature">
        <title>Sequence and analysis of chromosome 1 of the plant Arabidopsis thaliana.</title>
        <authorList>
            <person name="Theologis A."/>
            <person name="Ecker J.R."/>
            <person name="Palm C.J."/>
            <person name="Federspiel N.A."/>
            <person name="Kaul S."/>
            <person name="White O."/>
            <person name="Alonso J."/>
            <person name="Altafi H."/>
            <person name="Araujo R."/>
            <person name="Bowman C.L."/>
            <person name="Brooks S.Y."/>
            <person name="Buehler E."/>
            <person name="Chan A."/>
            <person name="Chao Q."/>
            <person name="Chen H."/>
            <person name="Cheuk R.F."/>
            <person name="Chin C.W."/>
            <person name="Chung M.K."/>
            <person name="Conn L."/>
            <person name="Conway A.B."/>
            <person name="Conway A.R."/>
            <person name="Creasy T.H."/>
            <person name="Dewar K."/>
            <person name="Dunn P."/>
            <person name="Etgu P."/>
            <person name="Feldblyum T.V."/>
            <person name="Feng J.-D."/>
            <person name="Fong B."/>
            <person name="Fujii C.Y."/>
            <person name="Gill J.E."/>
            <person name="Goldsmith A.D."/>
            <person name="Haas B."/>
            <person name="Hansen N.F."/>
            <person name="Hughes B."/>
            <person name="Huizar L."/>
            <person name="Hunter J.L."/>
            <person name="Jenkins J."/>
            <person name="Johnson-Hopson C."/>
            <person name="Khan S."/>
            <person name="Khaykin E."/>
            <person name="Kim C.J."/>
            <person name="Koo H.L."/>
            <person name="Kremenetskaia I."/>
            <person name="Kurtz D.B."/>
            <person name="Kwan A."/>
            <person name="Lam B."/>
            <person name="Langin-Hooper S."/>
            <person name="Lee A."/>
            <person name="Lee J.M."/>
            <person name="Lenz C.A."/>
            <person name="Li J.H."/>
            <person name="Li Y.-P."/>
            <person name="Lin X."/>
            <person name="Liu S.X."/>
            <person name="Liu Z.A."/>
            <person name="Luros J.S."/>
            <person name="Maiti R."/>
            <person name="Marziali A."/>
            <person name="Militscher J."/>
            <person name="Miranda M."/>
            <person name="Nguyen M."/>
            <person name="Nierman W.C."/>
            <person name="Osborne B.I."/>
            <person name="Pai G."/>
            <person name="Peterson J."/>
            <person name="Pham P.K."/>
            <person name="Rizzo M."/>
            <person name="Rooney T."/>
            <person name="Rowley D."/>
            <person name="Sakano H."/>
            <person name="Salzberg S.L."/>
            <person name="Schwartz J.R."/>
            <person name="Shinn P."/>
            <person name="Southwick A.M."/>
            <person name="Sun H."/>
            <person name="Tallon L.J."/>
            <person name="Tambunga G."/>
            <person name="Toriumi M.J."/>
            <person name="Town C.D."/>
            <person name="Utterback T."/>
            <person name="Van Aken S."/>
            <person name="Vaysberg M."/>
            <person name="Vysotskaia V.S."/>
            <person name="Walker M."/>
            <person name="Wu D."/>
            <person name="Yu G."/>
            <person name="Fraser C.M."/>
            <person name="Venter J.C."/>
            <person name="Davis R.W."/>
        </authorList>
    </citation>
    <scope>NUCLEOTIDE SEQUENCE [LARGE SCALE GENOMIC DNA]</scope>
    <source>
        <strain>cv. Columbia</strain>
    </source>
</reference>
<reference key="3">
    <citation type="journal article" date="2017" name="Plant J.">
        <title>Araport11: a complete reannotation of the Arabidopsis thaliana reference genome.</title>
        <authorList>
            <person name="Cheng C.Y."/>
            <person name="Krishnakumar V."/>
            <person name="Chan A.P."/>
            <person name="Thibaud-Nissen F."/>
            <person name="Schobel S."/>
            <person name="Town C.D."/>
        </authorList>
    </citation>
    <scope>GENOME REANNOTATION</scope>
    <source>
        <strain>cv. Columbia</strain>
    </source>
</reference>
<reference key="4">
    <citation type="journal article" date="2003" name="Science">
        <title>Empirical analysis of transcriptional activity in the Arabidopsis genome.</title>
        <authorList>
            <person name="Yamada K."/>
            <person name="Lim J."/>
            <person name="Dale J.M."/>
            <person name="Chen H."/>
            <person name="Shinn P."/>
            <person name="Palm C.J."/>
            <person name="Southwick A.M."/>
            <person name="Wu H.C."/>
            <person name="Kim C.J."/>
            <person name="Nguyen M."/>
            <person name="Pham P.K."/>
            <person name="Cheuk R.F."/>
            <person name="Karlin-Newmann G."/>
            <person name="Liu S.X."/>
            <person name="Lam B."/>
            <person name="Sakano H."/>
            <person name="Wu T."/>
            <person name="Yu G."/>
            <person name="Miranda M."/>
            <person name="Quach H.L."/>
            <person name="Tripp M."/>
            <person name="Chang C.H."/>
            <person name="Lee J.M."/>
            <person name="Toriumi M.J."/>
            <person name="Chan M.M."/>
            <person name="Tang C.C."/>
            <person name="Onodera C.S."/>
            <person name="Deng J.M."/>
            <person name="Akiyama K."/>
            <person name="Ansari Y."/>
            <person name="Arakawa T."/>
            <person name="Banh J."/>
            <person name="Banno F."/>
            <person name="Bowser L."/>
            <person name="Brooks S.Y."/>
            <person name="Carninci P."/>
            <person name="Chao Q."/>
            <person name="Choy N."/>
            <person name="Enju A."/>
            <person name="Goldsmith A.D."/>
            <person name="Gurjal M."/>
            <person name="Hansen N.F."/>
            <person name="Hayashizaki Y."/>
            <person name="Johnson-Hopson C."/>
            <person name="Hsuan V.W."/>
            <person name="Iida K."/>
            <person name="Karnes M."/>
            <person name="Khan S."/>
            <person name="Koesema E."/>
            <person name="Ishida J."/>
            <person name="Jiang P.X."/>
            <person name="Jones T."/>
            <person name="Kawai J."/>
            <person name="Kamiya A."/>
            <person name="Meyers C."/>
            <person name="Nakajima M."/>
            <person name="Narusaka M."/>
            <person name="Seki M."/>
            <person name="Sakurai T."/>
            <person name="Satou M."/>
            <person name="Tamse R."/>
            <person name="Vaysberg M."/>
            <person name="Wallender E.K."/>
            <person name="Wong C."/>
            <person name="Yamamura Y."/>
            <person name="Yuan S."/>
            <person name="Shinozaki K."/>
            <person name="Davis R.W."/>
            <person name="Theologis A."/>
            <person name="Ecker J.R."/>
        </authorList>
    </citation>
    <scope>NUCLEOTIDE SEQUENCE [LARGE SCALE MRNA]</scope>
    <source>
        <strain>cv. Columbia</strain>
    </source>
</reference>
<reference key="5">
    <citation type="journal article" date="2007" name="Mol. Cell. Proteomics">
        <title>Multidimensional protein identification technology (MudPIT) analysis of ubiquitinated proteins in plants.</title>
        <authorList>
            <person name="Maor R."/>
            <person name="Jones A."/>
            <person name="Nuehse T.S."/>
            <person name="Studholme D.J."/>
            <person name="Peck S.C."/>
            <person name="Shirasu K."/>
        </authorList>
    </citation>
    <scope>IDENTIFICATION BY MASS SPECTROMETRY [LARGE SCALE ANALYSIS]</scope>
    <source>
        <strain>cv. Landsberg erecta</strain>
    </source>
</reference>
<reference key="6">
    <citation type="journal article" date="2008" name="Plant Physiol.">
        <title>Galactinol and raffinose constitute a novel function to protect plants from oxidative damage.</title>
        <authorList>
            <person name="Nishizawa A."/>
            <person name="Yabuta Y."/>
            <person name="Shigeoka S."/>
        </authorList>
    </citation>
    <scope>INDUCTION BY METHYLVIOLOGEN</scope>
    <scope>GENE FAMILY</scope>
    <scope>NOMENCLATURE</scope>
</reference>
<reference key="7">
    <citation type="journal article" date="2009" name="Plant J.">
        <title>Histone occupancy-dependent and -independent removal of H3K27 trimethylation at cold-responsive genes in Arabidopsis.</title>
        <authorList>
            <person name="Kwon C.S."/>
            <person name="Lee D."/>
            <person name="Choi G."/>
            <person name="Chung W.I."/>
        </authorList>
    </citation>
    <scope>INDUCTION BY COLD</scope>
</reference>
<comment type="function">
    <text evidence="1">Galactinol synthase involved in the biosynthesis of raffinose family oligosaccharides (RFOs) that function as osmoprotectants. May promote plant stress tolerance (By similarity).</text>
</comment>
<comment type="catalytic activity">
    <reaction evidence="2">
        <text>myo-inositol + UDP-alpha-D-galactose = alpha-D-galactosyl-(1-&gt;3)-1D-myo-inositol + UDP + H(+)</text>
        <dbReference type="Rhea" id="RHEA:12464"/>
        <dbReference type="ChEBI" id="CHEBI:15378"/>
        <dbReference type="ChEBI" id="CHEBI:17268"/>
        <dbReference type="ChEBI" id="CHEBI:17505"/>
        <dbReference type="ChEBI" id="CHEBI:58223"/>
        <dbReference type="ChEBI" id="CHEBI:66914"/>
        <dbReference type="EC" id="2.4.1.123"/>
    </reaction>
</comment>
<comment type="cofactor">
    <cofactor evidence="1">
        <name>a divalent metal cation</name>
        <dbReference type="ChEBI" id="CHEBI:60240"/>
    </cofactor>
</comment>
<comment type="subcellular location">
    <subcellularLocation>
        <location evidence="5">Cytoplasm</location>
    </subcellularLocation>
</comment>
<comment type="induction">
    <text evidence="2 3 4">Induced by cold in a DREB1A-dependent manner; this induction is accompanied by a reduction in trimethylation of 'Lys-27' of histone H3 (H3K27me3) in GOLS3 promoter (PubMed:19500304). Induced by methylviologen (MV), a superoxide radical generating drug.</text>
</comment>
<comment type="similarity">
    <text evidence="5">Belongs to the glycosyltransferase 8 family. Galactosyltransferase subfamily.</text>
</comment>
<evidence type="ECO:0000250" key="1"/>
<evidence type="ECO:0000269" key="2">
    <source>
    </source>
</evidence>
<evidence type="ECO:0000269" key="3">
    <source>
    </source>
</evidence>
<evidence type="ECO:0000269" key="4">
    <source>
    </source>
</evidence>
<evidence type="ECO:0000305" key="5"/>
<protein>
    <recommendedName>
        <fullName>Galactinol synthase 3</fullName>
        <shortName>AtGolS3</shortName>
        <shortName>GolS-3</shortName>
        <ecNumber>2.4.1.123</ecNumber>
    </recommendedName>
</protein>
<name>GOLS3_ARATH</name>
<proteinExistence type="evidence at protein level"/>
<dbReference type="EC" id="2.4.1.123"/>
<dbReference type="EMBL" id="AB062850">
    <property type="protein sequence ID" value="BAB78532.1"/>
    <property type="molecule type" value="mRNA"/>
</dbReference>
<dbReference type="EMBL" id="AC003970">
    <property type="protein sequence ID" value="AAC33195.1"/>
    <property type="molecule type" value="Genomic_DNA"/>
</dbReference>
<dbReference type="EMBL" id="CP002684">
    <property type="protein sequence ID" value="AEE28432.1"/>
    <property type="molecule type" value="Genomic_DNA"/>
</dbReference>
<dbReference type="EMBL" id="AF370546">
    <property type="protein sequence ID" value="AAK48973.1"/>
    <property type="molecule type" value="mRNA"/>
</dbReference>
<dbReference type="EMBL" id="AY081452">
    <property type="protein sequence ID" value="AAM10014.1"/>
    <property type="molecule type" value="mRNA"/>
</dbReference>
<dbReference type="PIR" id="F86226">
    <property type="entry name" value="F86226"/>
</dbReference>
<dbReference type="RefSeq" id="NP_172406.1">
    <property type="nucleotide sequence ID" value="NM_100805.2"/>
</dbReference>
<dbReference type="SMR" id="O80518"/>
<dbReference type="FunCoup" id="O80518">
    <property type="interactions" value="246"/>
</dbReference>
<dbReference type="STRING" id="3702.O80518"/>
<dbReference type="CAZy" id="GT8">
    <property type="family name" value="Glycosyltransferase Family 8"/>
</dbReference>
<dbReference type="GlyGen" id="O80518">
    <property type="glycosylation" value="1 site"/>
</dbReference>
<dbReference type="PaxDb" id="3702-AT1G09350.1"/>
<dbReference type="EnsemblPlants" id="AT1G09350.1">
    <property type="protein sequence ID" value="AT1G09350.1"/>
    <property type="gene ID" value="AT1G09350"/>
</dbReference>
<dbReference type="GeneID" id="837457"/>
<dbReference type="Gramene" id="AT1G09350.1">
    <property type="protein sequence ID" value="AT1G09350.1"/>
    <property type="gene ID" value="AT1G09350"/>
</dbReference>
<dbReference type="KEGG" id="ath:AT1G09350"/>
<dbReference type="Araport" id="AT1G09350"/>
<dbReference type="TAIR" id="AT1G09350">
    <property type="gene designation" value="GOLS3"/>
</dbReference>
<dbReference type="eggNOG" id="KOG1950">
    <property type="taxonomic scope" value="Eukaryota"/>
</dbReference>
<dbReference type="HOGENOM" id="CLU_049943_3_0_1"/>
<dbReference type="InParanoid" id="O80518"/>
<dbReference type="OMA" id="AEHRRMW"/>
<dbReference type="PhylomeDB" id="O80518"/>
<dbReference type="BRENDA" id="2.4.1.123">
    <property type="organism ID" value="399"/>
</dbReference>
<dbReference type="PRO" id="PR:O80518"/>
<dbReference type="Proteomes" id="UP000006548">
    <property type="component" value="Chromosome 1"/>
</dbReference>
<dbReference type="ExpressionAtlas" id="O80518">
    <property type="expression patterns" value="baseline and differential"/>
</dbReference>
<dbReference type="GO" id="GO:0005737">
    <property type="term" value="C:cytoplasm"/>
    <property type="evidence" value="ECO:0007669"/>
    <property type="project" value="UniProtKB-SubCell"/>
</dbReference>
<dbReference type="GO" id="GO:0047216">
    <property type="term" value="F:inositol 3-alpha-galactosyltransferase activity"/>
    <property type="evidence" value="ECO:0000314"/>
    <property type="project" value="UniProtKB"/>
</dbReference>
<dbReference type="GO" id="GO:0046872">
    <property type="term" value="F:metal ion binding"/>
    <property type="evidence" value="ECO:0007669"/>
    <property type="project" value="UniProtKB-KW"/>
</dbReference>
<dbReference type="GO" id="GO:0006012">
    <property type="term" value="P:galactose metabolic process"/>
    <property type="evidence" value="ECO:0000250"/>
    <property type="project" value="UniProtKB"/>
</dbReference>
<dbReference type="GO" id="GO:0009409">
    <property type="term" value="P:response to cold"/>
    <property type="evidence" value="ECO:0000270"/>
    <property type="project" value="UniProtKB"/>
</dbReference>
<dbReference type="GO" id="GO:0006979">
    <property type="term" value="P:response to oxidative stress"/>
    <property type="evidence" value="ECO:0000270"/>
    <property type="project" value="TAIR"/>
</dbReference>
<dbReference type="CDD" id="cd02537">
    <property type="entry name" value="GT8_Glycogenin"/>
    <property type="match status" value="1"/>
</dbReference>
<dbReference type="FunFam" id="3.90.550.10:FF:000049">
    <property type="entry name" value="Hexosyltransferase"/>
    <property type="match status" value="1"/>
</dbReference>
<dbReference type="Gene3D" id="3.90.550.10">
    <property type="entry name" value="Spore Coat Polysaccharide Biosynthesis Protein SpsA, Chain A"/>
    <property type="match status" value="1"/>
</dbReference>
<dbReference type="InterPro" id="IPR002495">
    <property type="entry name" value="Glyco_trans_8"/>
</dbReference>
<dbReference type="InterPro" id="IPR050587">
    <property type="entry name" value="GNT1/Glycosyltrans_8"/>
</dbReference>
<dbReference type="InterPro" id="IPR029044">
    <property type="entry name" value="Nucleotide-diphossugar_trans"/>
</dbReference>
<dbReference type="PANTHER" id="PTHR11183">
    <property type="entry name" value="GLYCOGENIN SUBFAMILY MEMBER"/>
    <property type="match status" value="1"/>
</dbReference>
<dbReference type="Pfam" id="PF01501">
    <property type="entry name" value="Glyco_transf_8"/>
    <property type="match status" value="1"/>
</dbReference>
<dbReference type="SUPFAM" id="SSF53448">
    <property type="entry name" value="Nucleotide-diphospho-sugar transferases"/>
    <property type="match status" value="1"/>
</dbReference>
<gene>
    <name type="primary">GOLS3</name>
    <name type="ordered locus">At1g09350</name>
    <name type="ORF">F14J9.1</name>
</gene>
<keyword id="KW-0119">Carbohydrate metabolism</keyword>
<keyword id="KW-0963">Cytoplasm</keyword>
<keyword id="KW-0299">Galactose metabolism</keyword>
<keyword id="KW-0328">Glycosyltransferase</keyword>
<keyword id="KW-0464">Manganese</keyword>
<keyword id="KW-0479">Metal-binding</keyword>
<keyword id="KW-1185">Reference proteome</keyword>
<keyword id="KW-0808">Transferase</keyword>